<organism>
    <name type="scientific">Exiguobacterium sibiricum (strain DSM 17290 / CCUG 55495 / CIP 109462 / JCM 13490 / 255-15)</name>
    <dbReference type="NCBI Taxonomy" id="262543"/>
    <lineage>
        <taxon>Bacteria</taxon>
        <taxon>Bacillati</taxon>
        <taxon>Bacillota</taxon>
        <taxon>Bacilli</taxon>
        <taxon>Bacillales</taxon>
        <taxon>Bacillales Family XII. Incertae Sedis</taxon>
        <taxon>Exiguobacterium</taxon>
    </lineage>
</organism>
<gene>
    <name evidence="1" type="primary">ispH</name>
    <name type="ordered locus">Exig_0836</name>
</gene>
<comment type="function">
    <text evidence="1">Catalyzes the conversion of 1-hydroxy-2-methyl-2-(E)-butenyl 4-diphosphate (HMBPP) into a mixture of isopentenyl diphosphate (IPP) and dimethylallyl diphosphate (DMAPP). Acts in the terminal step of the DOXP/MEP pathway for isoprenoid precursor biosynthesis.</text>
</comment>
<comment type="catalytic activity">
    <reaction evidence="1">
        <text>isopentenyl diphosphate + 2 oxidized [2Fe-2S]-[ferredoxin] + H2O = (2E)-4-hydroxy-3-methylbut-2-enyl diphosphate + 2 reduced [2Fe-2S]-[ferredoxin] + 2 H(+)</text>
        <dbReference type="Rhea" id="RHEA:24488"/>
        <dbReference type="Rhea" id="RHEA-COMP:10000"/>
        <dbReference type="Rhea" id="RHEA-COMP:10001"/>
        <dbReference type="ChEBI" id="CHEBI:15377"/>
        <dbReference type="ChEBI" id="CHEBI:15378"/>
        <dbReference type="ChEBI" id="CHEBI:33737"/>
        <dbReference type="ChEBI" id="CHEBI:33738"/>
        <dbReference type="ChEBI" id="CHEBI:128753"/>
        <dbReference type="ChEBI" id="CHEBI:128769"/>
        <dbReference type="EC" id="1.17.7.4"/>
    </reaction>
</comment>
<comment type="catalytic activity">
    <reaction evidence="1">
        <text>dimethylallyl diphosphate + 2 oxidized [2Fe-2S]-[ferredoxin] + H2O = (2E)-4-hydroxy-3-methylbut-2-enyl diphosphate + 2 reduced [2Fe-2S]-[ferredoxin] + 2 H(+)</text>
        <dbReference type="Rhea" id="RHEA:24825"/>
        <dbReference type="Rhea" id="RHEA-COMP:10000"/>
        <dbReference type="Rhea" id="RHEA-COMP:10001"/>
        <dbReference type="ChEBI" id="CHEBI:15377"/>
        <dbReference type="ChEBI" id="CHEBI:15378"/>
        <dbReference type="ChEBI" id="CHEBI:33737"/>
        <dbReference type="ChEBI" id="CHEBI:33738"/>
        <dbReference type="ChEBI" id="CHEBI:57623"/>
        <dbReference type="ChEBI" id="CHEBI:128753"/>
        <dbReference type="EC" id="1.17.7.4"/>
    </reaction>
</comment>
<comment type="cofactor">
    <cofactor evidence="1">
        <name>[4Fe-4S] cluster</name>
        <dbReference type="ChEBI" id="CHEBI:49883"/>
    </cofactor>
    <text evidence="1">Binds 1 [4Fe-4S] cluster per subunit.</text>
</comment>
<comment type="pathway">
    <text evidence="1">Isoprenoid biosynthesis; dimethylallyl diphosphate biosynthesis; dimethylallyl diphosphate from (2E)-4-hydroxy-3-methylbutenyl diphosphate: step 1/1.</text>
</comment>
<comment type="pathway">
    <text evidence="1">Isoprenoid biosynthesis; isopentenyl diphosphate biosynthesis via DXP pathway; isopentenyl diphosphate from 1-deoxy-D-xylulose 5-phosphate: step 6/6.</text>
</comment>
<comment type="similarity">
    <text evidence="1">Belongs to the IspH family.</text>
</comment>
<protein>
    <recommendedName>
        <fullName evidence="1">4-hydroxy-3-methylbut-2-enyl diphosphate reductase</fullName>
        <shortName evidence="1">HMBPP reductase</shortName>
        <ecNumber evidence="1">1.17.7.4</ecNumber>
    </recommendedName>
</protein>
<sequence>MLVKKISPRGYCYGVVDAMKLAQQAALNDNLPRPIHILGMIVHNAHVTREFERMGVLTVDGPDRLEALETIKEGTVIFTAHGISPAVYARAAEKKLTVVDATCPDVTRTHDLIRSVVADDYEVIYVGKHGHPEPEGAVGVAPEHVHLIEKVEDIEALPAHLADKKIIVTNQTTMSQWDVQALMEHVRKKYPHVEVHNEICNATQVRQEAVAEQAGDCDLVIVVGDPRSNNSNRLAQVSFDIAATPAHRIGDLTELDLSWLDGVNQVGVTSGASTPTPITKKVIDFLQQYDPADISTHDKTPFLELRRILPKVKIL</sequence>
<name>ISPH_EXIS2</name>
<proteinExistence type="inferred from homology"/>
<reference key="1">
    <citation type="submission" date="2008-04" db="EMBL/GenBank/DDBJ databases">
        <title>Complete sequence of chromosome of Exiguobacterium sibiricum 255-15.</title>
        <authorList>
            <consortium name="US DOE Joint Genome Institute"/>
            <person name="Copeland A."/>
            <person name="Lucas S."/>
            <person name="Lapidus A."/>
            <person name="Glavina del Rio T."/>
            <person name="Dalin E."/>
            <person name="Tice H."/>
            <person name="Bruce D."/>
            <person name="Goodwin L."/>
            <person name="Pitluck S."/>
            <person name="Kiss H."/>
            <person name="Chertkov O."/>
            <person name="Monk C."/>
            <person name="Brettin T."/>
            <person name="Detter J.C."/>
            <person name="Han C."/>
            <person name="Kuske C.R."/>
            <person name="Schmutz J."/>
            <person name="Larimer F."/>
            <person name="Land M."/>
            <person name="Hauser L."/>
            <person name="Kyrpides N."/>
            <person name="Mikhailova N."/>
            <person name="Vishnivetskaya T."/>
            <person name="Rodrigues D.F."/>
            <person name="Gilichinsky D."/>
            <person name="Tiedje J."/>
            <person name="Richardson P."/>
        </authorList>
    </citation>
    <scope>NUCLEOTIDE SEQUENCE [LARGE SCALE GENOMIC DNA]</scope>
    <source>
        <strain>DSM 17290 / CCUG 55495 / CIP 109462 / JCM 13490 / 255-15</strain>
    </source>
</reference>
<feature type="chain" id="PRO_1000098949" description="4-hydroxy-3-methylbut-2-enyl diphosphate reductase">
    <location>
        <begin position="1"/>
        <end position="315"/>
    </location>
</feature>
<feature type="active site" description="Proton donor" evidence="1">
    <location>
        <position position="133"/>
    </location>
</feature>
<feature type="binding site" evidence="1">
    <location>
        <position position="12"/>
    </location>
    <ligand>
        <name>[4Fe-4S] cluster</name>
        <dbReference type="ChEBI" id="CHEBI:49883"/>
    </ligand>
</feature>
<feature type="binding site" evidence="1">
    <location>
        <position position="43"/>
    </location>
    <ligand>
        <name>(2E)-4-hydroxy-3-methylbut-2-enyl diphosphate</name>
        <dbReference type="ChEBI" id="CHEBI:128753"/>
    </ligand>
</feature>
<feature type="binding site" evidence="1">
    <location>
        <position position="43"/>
    </location>
    <ligand>
        <name>dimethylallyl diphosphate</name>
        <dbReference type="ChEBI" id="CHEBI:57623"/>
    </ligand>
</feature>
<feature type="binding site" evidence="1">
    <location>
        <position position="43"/>
    </location>
    <ligand>
        <name>isopentenyl diphosphate</name>
        <dbReference type="ChEBI" id="CHEBI:128769"/>
    </ligand>
</feature>
<feature type="binding site" evidence="1">
    <location>
        <position position="81"/>
    </location>
    <ligand>
        <name>(2E)-4-hydroxy-3-methylbut-2-enyl diphosphate</name>
        <dbReference type="ChEBI" id="CHEBI:128753"/>
    </ligand>
</feature>
<feature type="binding site" evidence="1">
    <location>
        <position position="81"/>
    </location>
    <ligand>
        <name>dimethylallyl diphosphate</name>
        <dbReference type="ChEBI" id="CHEBI:57623"/>
    </ligand>
</feature>
<feature type="binding site" evidence="1">
    <location>
        <position position="81"/>
    </location>
    <ligand>
        <name>isopentenyl diphosphate</name>
        <dbReference type="ChEBI" id="CHEBI:128769"/>
    </ligand>
</feature>
<feature type="binding site" evidence="1">
    <location>
        <position position="103"/>
    </location>
    <ligand>
        <name>[4Fe-4S] cluster</name>
        <dbReference type="ChEBI" id="CHEBI:49883"/>
    </ligand>
</feature>
<feature type="binding site" evidence="1">
    <location>
        <position position="131"/>
    </location>
    <ligand>
        <name>(2E)-4-hydroxy-3-methylbut-2-enyl diphosphate</name>
        <dbReference type="ChEBI" id="CHEBI:128753"/>
    </ligand>
</feature>
<feature type="binding site" evidence="1">
    <location>
        <position position="131"/>
    </location>
    <ligand>
        <name>dimethylallyl diphosphate</name>
        <dbReference type="ChEBI" id="CHEBI:57623"/>
    </ligand>
</feature>
<feature type="binding site" evidence="1">
    <location>
        <position position="131"/>
    </location>
    <ligand>
        <name>isopentenyl diphosphate</name>
        <dbReference type="ChEBI" id="CHEBI:128769"/>
    </ligand>
</feature>
<feature type="binding site" evidence="1">
    <location>
        <position position="172"/>
    </location>
    <ligand>
        <name>(2E)-4-hydroxy-3-methylbut-2-enyl diphosphate</name>
        <dbReference type="ChEBI" id="CHEBI:128753"/>
    </ligand>
</feature>
<feature type="binding site" evidence="1">
    <location>
        <position position="200"/>
    </location>
    <ligand>
        <name>[4Fe-4S] cluster</name>
        <dbReference type="ChEBI" id="CHEBI:49883"/>
    </ligand>
</feature>
<feature type="binding site" evidence="1">
    <location>
        <position position="228"/>
    </location>
    <ligand>
        <name>(2E)-4-hydroxy-3-methylbut-2-enyl diphosphate</name>
        <dbReference type="ChEBI" id="CHEBI:128753"/>
    </ligand>
</feature>
<feature type="binding site" evidence="1">
    <location>
        <position position="228"/>
    </location>
    <ligand>
        <name>dimethylallyl diphosphate</name>
        <dbReference type="ChEBI" id="CHEBI:57623"/>
    </ligand>
</feature>
<feature type="binding site" evidence="1">
    <location>
        <position position="228"/>
    </location>
    <ligand>
        <name>isopentenyl diphosphate</name>
        <dbReference type="ChEBI" id="CHEBI:128769"/>
    </ligand>
</feature>
<feature type="binding site" evidence="1">
    <location>
        <position position="230"/>
    </location>
    <ligand>
        <name>(2E)-4-hydroxy-3-methylbut-2-enyl diphosphate</name>
        <dbReference type="ChEBI" id="CHEBI:128753"/>
    </ligand>
</feature>
<feature type="binding site" evidence="1">
    <location>
        <position position="230"/>
    </location>
    <ligand>
        <name>dimethylallyl diphosphate</name>
        <dbReference type="ChEBI" id="CHEBI:57623"/>
    </ligand>
</feature>
<feature type="binding site" evidence="1">
    <location>
        <position position="230"/>
    </location>
    <ligand>
        <name>isopentenyl diphosphate</name>
        <dbReference type="ChEBI" id="CHEBI:128769"/>
    </ligand>
</feature>
<feature type="binding site" evidence="1">
    <location>
        <position position="273"/>
    </location>
    <ligand>
        <name>(2E)-4-hydroxy-3-methylbut-2-enyl diphosphate</name>
        <dbReference type="ChEBI" id="CHEBI:128753"/>
    </ligand>
</feature>
<feature type="binding site" evidence="1">
    <location>
        <position position="273"/>
    </location>
    <ligand>
        <name>dimethylallyl diphosphate</name>
        <dbReference type="ChEBI" id="CHEBI:57623"/>
    </ligand>
</feature>
<feature type="binding site" evidence="1">
    <location>
        <position position="273"/>
    </location>
    <ligand>
        <name>isopentenyl diphosphate</name>
        <dbReference type="ChEBI" id="CHEBI:128769"/>
    </ligand>
</feature>
<evidence type="ECO:0000255" key="1">
    <source>
        <dbReference type="HAMAP-Rule" id="MF_00191"/>
    </source>
</evidence>
<accession>B1YL84</accession>
<keyword id="KW-0004">4Fe-4S</keyword>
<keyword id="KW-0408">Iron</keyword>
<keyword id="KW-0411">Iron-sulfur</keyword>
<keyword id="KW-0414">Isoprene biosynthesis</keyword>
<keyword id="KW-0479">Metal-binding</keyword>
<keyword id="KW-0560">Oxidoreductase</keyword>
<keyword id="KW-1185">Reference proteome</keyword>
<dbReference type="EC" id="1.17.7.4" evidence="1"/>
<dbReference type="EMBL" id="CP001022">
    <property type="protein sequence ID" value="ACB60316.1"/>
    <property type="molecule type" value="Genomic_DNA"/>
</dbReference>
<dbReference type="RefSeq" id="WP_012369740.1">
    <property type="nucleotide sequence ID" value="NC_010556.1"/>
</dbReference>
<dbReference type="SMR" id="B1YL84"/>
<dbReference type="STRING" id="262543.Exig_0836"/>
<dbReference type="KEGG" id="esi:Exig_0836"/>
<dbReference type="eggNOG" id="COG0761">
    <property type="taxonomic scope" value="Bacteria"/>
</dbReference>
<dbReference type="HOGENOM" id="CLU_027486_0_0_9"/>
<dbReference type="OrthoDB" id="9777362at2"/>
<dbReference type="UniPathway" id="UPA00056">
    <property type="reaction ID" value="UER00097"/>
</dbReference>
<dbReference type="UniPathway" id="UPA00059">
    <property type="reaction ID" value="UER00105"/>
</dbReference>
<dbReference type="Proteomes" id="UP000001681">
    <property type="component" value="Chromosome"/>
</dbReference>
<dbReference type="GO" id="GO:0051539">
    <property type="term" value="F:4 iron, 4 sulfur cluster binding"/>
    <property type="evidence" value="ECO:0007669"/>
    <property type="project" value="UniProtKB-UniRule"/>
</dbReference>
<dbReference type="GO" id="GO:0051745">
    <property type="term" value="F:4-hydroxy-3-methylbut-2-enyl diphosphate reductase activity"/>
    <property type="evidence" value="ECO:0007669"/>
    <property type="project" value="UniProtKB-UniRule"/>
</dbReference>
<dbReference type="GO" id="GO:0046872">
    <property type="term" value="F:metal ion binding"/>
    <property type="evidence" value="ECO:0007669"/>
    <property type="project" value="UniProtKB-KW"/>
</dbReference>
<dbReference type="GO" id="GO:0050992">
    <property type="term" value="P:dimethylallyl diphosphate biosynthetic process"/>
    <property type="evidence" value="ECO:0007669"/>
    <property type="project" value="UniProtKB-UniRule"/>
</dbReference>
<dbReference type="GO" id="GO:0019288">
    <property type="term" value="P:isopentenyl diphosphate biosynthetic process, methylerythritol 4-phosphate pathway"/>
    <property type="evidence" value="ECO:0007669"/>
    <property type="project" value="UniProtKB-UniRule"/>
</dbReference>
<dbReference type="GO" id="GO:0016114">
    <property type="term" value="P:terpenoid biosynthetic process"/>
    <property type="evidence" value="ECO:0007669"/>
    <property type="project" value="UniProtKB-UniRule"/>
</dbReference>
<dbReference type="CDD" id="cd13944">
    <property type="entry name" value="lytB_ispH"/>
    <property type="match status" value="1"/>
</dbReference>
<dbReference type="Gene3D" id="3.40.50.11270">
    <property type="match status" value="1"/>
</dbReference>
<dbReference type="Gene3D" id="3.40.1010.20">
    <property type="entry name" value="4-hydroxy-3-methylbut-2-enyl diphosphate reductase, catalytic domain"/>
    <property type="match status" value="2"/>
</dbReference>
<dbReference type="HAMAP" id="MF_00191">
    <property type="entry name" value="IspH"/>
    <property type="match status" value="1"/>
</dbReference>
<dbReference type="InterPro" id="IPR003451">
    <property type="entry name" value="LytB/IspH"/>
</dbReference>
<dbReference type="NCBIfam" id="TIGR00216">
    <property type="entry name" value="ispH_lytB"/>
    <property type="match status" value="1"/>
</dbReference>
<dbReference type="NCBIfam" id="NF002187">
    <property type="entry name" value="PRK01045.1-1"/>
    <property type="match status" value="1"/>
</dbReference>
<dbReference type="PANTHER" id="PTHR30426">
    <property type="entry name" value="4-HYDROXY-3-METHYLBUT-2-ENYL DIPHOSPHATE REDUCTASE"/>
    <property type="match status" value="1"/>
</dbReference>
<dbReference type="PANTHER" id="PTHR30426:SF0">
    <property type="entry name" value="4-HYDROXY-3-METHYLBUT-2-ENYL DIPHOSPHATE REDUCTASE"/>
    <property type="match status" value="1"/>
</dbReference>
<dbReference type="Pfam" id="PF02401">
    <property type="entry name" value="LYTB"/>
    <property type="match status" value="1"/>
</dbReference>
<dbReference type="SUPFAM" id="SSF53850">
    <property type="entry name" value="Periplasmic binding protein-like II"/>
    <property type="match status" value="1"/>
</dbReference>